<proteinExistence type="inferred from homology"/>
<evidence type="ECO:0000256" key="1">
    <source>
        <dbReference type="SAM" id="MobiDB-lite"/>
    </source>
</evidence>
<evidence type="ECO:0000305" key="2"/>
<name>ECOT3_LEIMA</name>
<feature type="chain" id="PRO_0000291599" description="Ecotin-like protein 3">
    <location>
        <begin position="1"/>
        <end position="381"/>
    </location>
</feature>
<feature type="region of interest" description="Disordered" evidence="1">
    <location>
        <begin position="232"/>
        <end position="381"/>
    </location>
</feature>
<feature type="compositionally biased region" description="Polar residues" evidence="1">
    <location>
        <begin position="273"/>
        <end position="292"/>
    </location>
</feature>
<feature type="compositionally biased region" description="Basic and acidic residues" evidence="1">
    <location>
        <begin position="336"/>
        <end position="347"/>
    </location>
</feature>
<feature type="compositionally biased region" description="Polar residues" evidence="1">
    <location>
        <begin position="363"/>
        <end position="372"/>
    </location>
</feature>
<comment type="similarity">
    <text evidence="2">Belongs to the protease inhibitor I11 (ecotin) family.</text>
</comment>
<accession>Q4QFD3</accession>
<organism>
    <name type="scientific">Leishmania major</name>
    <dbReference type="NCBI Taxonomy" id="5664"/>
    <lineage>
        <taxon>Eukaryota</taxon>
        <taxon>Discoba</taxon>
        <taxon>Euglenozoa</taxon>
        <taxon>Kinetoplastea</taxon>
        <taxon>Metakinetoplastina</taxon>
        <taxon>Trypanosomatida</taxon>
        <taxon>Trypanosomatidae</taxon>
        <taxon>Leishmaniinae</taxon>
        <taxon>Leishmania</taxon>
    </lineage>
</organism>
<gene>
    <name type="ORF">LmjF15.0520</name>
    <name type="ORF">LmjF_15_0520</name>
</gene>
<reference key="1">
    <citation type="journal article" date="2005" name="Science">
        <title>The genome of the kinetoplastid parasite, Leishmania major.</title>
        <authorList>
            <person name="Ivens A.C."/>
            <person name="Peacock C.S."/>
            <person name="Worthey E.A."/>
            <person name="Murphy L."/>
            <person name="Aggarwal G."/>
            <person name="Berriman M."/>
            <person name="Sisk E."/>
            <person name="Rajandream M.A."/>
            <person name="Adlem E."/>
            <person name="Aert R."/>
            <person name="Anupama A."/>
            <person name="Apostolou Z."/>
            <person name="Attipoe P."/>
            <person name="Bason N."/>
            <person name="Bauser C."/>
            <person name="Beck A."/>
            <person name="Beverley S.M."/>
            <person name="Bianchettin G."/>
            <person name="Borzym K."/>
            <person name="Bothe G."/>
            <person name="Bruschi C.V."/>
            <person name="Collins M."/>
            <person name="Cadag E."/>
            <person name="Ciarloni L."/>
            <person name="Clayton C."/>
            <person name="Coulson R.M.R."/>
            <person name="Cronin A."/>
            <person name="Cruz A.K."/>
            <person name="Davies R.M."/>
            <person name="De Gaudenzi J."/>
            <person name="Dobson D.E."/>
            <person name="Duesterhoeft A."/>
            <person name="Fazelina G."/>
            <person name="Fosker N."/>
            <person name="Frasch A.C."/>
            <person name="Fraser A."/>
            <person name="Fuchs M."/>
            <person name="Gabel C."/>
            <person name="Goble A."/>
            <person name="Goffeau A."/>
            <person name="Harris D."/>
            <person name="Hertz-Fowler C."/>
            <person name="Hilbert H."/>
            <person name="Horn D."/>
            <person name="Huang Y."/>
            <person name="Klages S."/>
            <person name="Knights A."/>
            <person name="Kube M."/>
            <person name="Larke N."/>
            <person name="Litvin L."/>
            <person name="Lord A."/>
            <person name="Louie T."/>
            <person name="Marra M."/>
            <person name="Masuy D."/>
            <person name="Matthews K."/>
            <person name="Michaeli S."/>
            <person name="Mottram J.C."/>
            <person name="Mueller-Auer S."/>
            <person name="Munden H."/>
            <person name="Nelson S."/>
            <person name="Norbertczak H."/>
            <person name="Oliver K."/>
            <person name="O'neil S."/>
            <person name="Pentony M."/>
            <person name="Pohl T.M."/>
            <person name="Price C."/>
            <person name="Purnelle B."/>
            <person name="Quail M.A."/>
            <person name="Rabbinowitsch E."/>
            <person name="Reinhardt R."/>
            <person name="Rieger M."/>
            <person name="Rinta J."/>
            <person name="Robben J."/>
            <person name="Robertson L."/>
            <person name="Ruiz J.C."/>
            <person name="Rutter S."/>
            <person name="Saunders D."/>
            <person name="Schaefer M."/>
            <person name="Schein J."/>
            <person name="Schwartz D.C."/>
            <person name="Seeger K."/>
            <person name="Seyler A."/>
            <person name="Sharp S."/>
            <person name="Shin H."/>
            <person name="Sivam D."/>
            <person name="Squares R."/>
            <person name="Squares S."/>
            <person name="Tosato V."/>
            <person name="Vogt C."/>
            <person name="Volckaert G."/>
            <person name="Wambutt R."/>
            <person name="Warren T."/>
            <person name="Wedler H."/>
            <person name="Woodward J."/>
            <person name="Zhou S."/>
            <person name="Zimmermann W."/>
            <person name="Smith D.F."/>
            <person name="Blackwell J.M."/>
            <person name="Stuart K.D."/>
            <person name="Barrell B.G."/>
            <person name="Myler P.J."/>
        </authorList>
    </citation>
    <scope>NUCLEOTIDE SEQUENCE [LARGE SCALE GENOMIC DNA]</scope>
    <source>
        <strain>MHOM/IL/81/Friedlin</strain>
    </source>
</reference>
<protein>
    <recommendedName>
        <fullName>Ecotin-like protein 3</fullName>
    </recommendedName>
</protein>
<dbReference type="EMBL" id="FR796411">
    <property type="protein sequence ID" value="CAJ03276.1"/>
    <property type="molecule type" value="Genomic_DNA"/>
</dbReference>
<dbReference type="RefSeq" id="XP_001681965.1">
    <property type="nucleotide sequence ID" value="XM_001681913.1"/>
</dbReference>
<dbReference type="SMR" id="Q4QFD3"/>
<dbReference type="MEROPS" id="I11.004"/>
<dbReference type="EnsemblProtists" id="CAJ03276">
    <property type="protein sequence ID" value="CAJ03276"/>
    <property type="gene ID" value="LMJF_15_0520"/>
</dbReference>
<dbReference type="GeneID" id="5650428"/>
<dbReference type="KEGG" id="lma:LMJF_15_0520"/>
<dbReference type="VEuPathDB" id="TriTrypDB:LmjF.15.0520"/>
<dbReference type="VEuPathDB" id="TriTrypDB:LMJFC_150011100"/>
<dbReference type="VEuPathDB" id="TriTrypDB:LMJLV39_150011000"/>
<dbReference type="VEuPathDB" id="TriTrypDB:LMJSD75_150011000"/>
<dbReference type="eggNOG" id="ENOG502SM48">
    <property type="taxonomic scope" value="Eukaryota"/>
</dbReference>
<dbReference type="InParanoid" id="Q4QFD3"/>
<dbReference type="OMA" id="PGRHENC"/>
<dbReference type="Proteomes" id="UP000000542">
    <property type="component" value="Chromosome 15"/>
</dbReference>
<dbReference type="GO" id="GO:0004867">
    <property type="term" value="F:serine-type endopeptidase inhibitor activity"/>
    <property type="evidence" value="ECO:0007669"/>
    <property type="project" value="InterPro"/>
</dbReference>
<dbReference type="GO" id="GO:0042784">
    <property type="term" value="P:symbiont-mediated suppression of host complement activation"/>
    <property type="evidence" value="ECO:0000315"/>
    <property type="project" value="GeneDB"/>
</dbReference>
<dbReference type="FunFam" id="4.10.1230.10:FF:000002">
    <property type="entry name" value="Ecotin family (I11)"/>
    <property type="match status" value="1"/>
</dbReference>
<dbReference type="Gene3D" id="2.60.40.550">
    <property type="entry name" value="Ecotin"/>
    <property type="match status" value="1"/>
</dbReference>
<dbReference type="Gene3D" id="4.10.1230.10">
    <property type="entry name" value="Ecotin, trypsin inhibitor"/>
    <property type="match status" value="1"/>
</dbReference>
<dbReference type="InterPro" id="IPR027438">
    <property type="entry name" value="Ecotin_C"/>
</dbReference>
<dbReference type="InterPro" id="IPR036198">
    <property type="entry name" value="Ecotin_sf"/>
</dbReference>
<dbReference type="InterPro" id="IPR005658">
    <property type="entry name" value="Prot_inh_ecotin"/>
</dbReference>
<dbReference type="PANTHER" id="PTHR35890">
    <property type="match status" value="1"/>
</dbReference>
<dbReference type="PANTHER" id="PTHR35890:SF3">
    <property type="entry name" value="ECOTIN"/>
    <property type="match status" value="1"/>
</dbReference>
<dbReference type="Pfam" id="PF03974">
    <property type="entry name" value="Ecotin"/>
    <property type="match status" value="1"/>
</dbReference>
<dbReference type="SUPFAM" id="SSF49772">
    <property type="entry name" value="Ecotin, trypsin inhibitor"/>
    <property type="match status" value="1"/>
</dbReference>
<keyword id="KW-1185">Reference proteome</keyword>
<sequence>MPSLQDYHVPYPAAAPGQVRKVIYLPRQNPTVEQQHLRVQIIPGRHENCDDGRLYKLTGSVTEETLQGWGYSYYVVTLGDIYAAHRSSSDPARATTFVALDESPVIAYNSKLPIVVYVPEGAELRYRIWTDDASLAQSIQQKPEAPALPQPHLVPVTEGQECPQELPRCGAPSEYVRQDYKASMLSVEEVHRLSNNTPPLIPSAVHESAHEAHAAPPLHSAVLEEHGRPGMEHLEVCPKNNGSEGREQPAEEASTLKQRSSSSSSNPRHHSANESSPSRPRLSSTAYWPQENSKTKRSPSATHKPRRSTDSAAIEETGVGTPKKNRSSSGSASNKRKAEDDVYEKTMKNFWNRARSDSPRKASASSTKSGNGSKADPVDGK</sequence>